<reference key="1">
    <citation type="submission" date="2007-04" db="EMBL/GenBank/DDBJ databases">
        <title>Complete sequence of chromosome of Rhodobacter sphaeroides ATCC 17025.</title>
        <authorList>
            <consortium name="US DOE Joint Genome Institute"/>
            <person name="Copeland A."/>
            <person name="Lucas S."/>
            <person name="Lapidus A."/>
            <person name="Barry K."/>
            <person name="Detter J.C."/>
            <person name="Glavina del Rio T."/>
            <person name="Hammon N."/>
            <person name="Israni S."/>
            <person name="Dalin E."/>
            <person name="Tice H."/>
            <person name="Pitluck S."/>
            <person name="Chertkov O."/>
            <person name="Brettin T."/>
            <person name="Bruce D."/>
            <person name="Han C."/>
            <person name="Schmutz J."/>
            <person name="Larimer F."/>
            <person name="Land M."/>
            <person name="Hauser L."/>
            <person name="Kyrpides N."/>
            <person name="Kim E."/>
            <person name="Richardson P."/>
            <person name="Mackenzie C."/>
            <person name="Choudhary M."/>
            <person name="Donohue T.J."/>
            <person name="Kaplan S."/>
        </authorList>
    </citation>
    <scope>NUCLEOTIDE SEQUENCE [LARGE SCALE GENOMIC DNA]</scope>
    <source>
        <strain>ATCC 17025 / ATH 2.4.3</strain>
    </source>
</reference>
<evidence type="ECO:0000255" key="1">
    <source>
        <dbReference type="HAMAP-Rule" id="MF_00038"/>
    </source>
</evidence>
<organism>
    <name type="scientific">Cereibacter sphaeroides (strain ATCC 17025 / ATH 2.4.3)</name>
    <name type="common">Rhodobacter sphaeroides</name>
    <dbReference type="NCBI Taxonomy" id="349102"/>
    <lineage>
        <taxon>Bacteria</taxon>
        <taxon>Pseudomonadati</taxon>
        <taxon>Pseudomonadota</taxon>
        <taxon>Alphaproteobacteria</taxon>
        <taxon>Rhodobacterales</taxon>
        <taxon>Paracoccaceae</taxon>
        <taxon>Cereibacter</taxon>
    </lineage>
</organism>
<comment type="function">
    <text evidence="1">Catalyzes the initial step of the lipid cycle reactions in the biosynthesis of the cell wall peptidoglycan: transfers peptidoglycan precursor phospho-MurNAc-pentapeptide from UDP-MurNAc-pentapeptide onto the lipid carrier undecaprenyl phosphate, yielding undecaprenyl-pyrophosphoryl-MurNAc-pentapeptide, known as lipid I.</text>
</comment>
<comment type="catalytic activity">
    <reaction evidence="1">
        <text>UDP-N-acetyl-alpha-D-muramoyl-L-alanyl-gamma-D-glutamyl-meso-2,6-diaminopimeloyl-D-alanyl-D-alanine + di-trans,octa-cis-undecaprenyl phosphate = di-trans,octa-cis-undecaprenyl diphospho-N-acetyl-alpha-D-muramoyl-L-alanyl-D-glutamyl-meso-2,6-diaminopimeloyl-D-alanyl-D-alanine + UMP</text>
        <dbReference type="Rhea" id="RHEA:28386"/>
        <dbReference type="ChEBI" id="CHEBI:57865"/>
        <dbReference type="ChEBI" id="CHEBI:60392"/>
        <dbReference type="ChEBI" id="CHEBI:61386"/>
        <dbReference type="ChEBI" id="CHEBI:61387"/>
        <dbReference type="EC" id="2.7.8.13"/>
    </reaction>
</comment>
<comment type="cofactor">
    <cofactor evidence="1">
        <name>Mg(2+)</name>
        <dbReference type="ChEBI" id="CHEBI:18420"/>
    </cofactor>
</comment>
<comment type="pathway">
    <text evidence="1">Cell wall biogenesis; peptidoglycan biosynthesis.</text>
</comment>
<comment type="subcellular location">
    <subcellularLocation>
        <location evidence="1">Cell inner membrane</location>
        <topology evidence="1">Multi-pass membrane protein</topology>
    </subcellularLocation>
</comment>
<comment type="similarity">
    <text evidence="1">Belongs to the glycosyltransferase 4 family. MraY subfamily.</text>
</comment>
<proteinExistence type="inferred from homology"/>
<feature type="chain" id="PRO_1000003045" description="Phospho-N-acetylmuramoyl-pentapeptide-transferase">
    <location>
        <begin position="1"/>
        <end position="360"/>
    </location>
</feature>
<feature type="transmembrane region" description="Helical" evidence="1">
    <location>
        <begin position="27"/>
        <end position="47"/>
    </location>
</feature>
<feature type="transmembrane region" description="Helical" evidence="1">
    <location>
        <begin position="71"/>
        <end position="91"/>
    </location>
</feature>
<feature type="transmembrane region" description="Helical" evidence="1">
    <location>
        <begin position="93"/>
        <end position="113"/>
    </location>
</feature>
<feature type="transmembrane region" description="Helical" evidence="1">
    <location>
        <begin position="134"/>
        <end position="154"/>
    </location>
</feature>
<feature type="transmembrane region" description="Helical" evidence="1">
    <location>
        <begin position="168"/>
        <end position="188"/>
    </location>
</feature>
<feature type="transmembrane region" description="Helical" evidence="1">
    <location>
        <begin position="199"/>
        <end position="219"/>
    </location>
</feature>
<feature type="transmembrane region" description="Helical" evidence="1">
    <location>
        <begin position="239"/>
        <end position="259"/>
    </location>
</feature>
<feature type="transmembrane region" description="Helical" evidence="1">
    <location>
        <begin position="262"/>
        <end position="282"/>
    </location>
</feature>
<feature type="transmembrane region" description="Helical" evidence="1">
    <location>
        <begin position="288"/>
        <end position="308"/>
    </location>
</feature>
<feature type="transmembrane region" description="Helical" evidence="1">
    <location>
        <begin position="337"/>
        <end position="357"/>
    </location>
</feature>
<gene>
    <name evidence="1" type="primary">mraY</name>
    <name type="ordered locus">Rsph17025_0688</name>
</gene>
<sequence>MLYTLTAFSDGGDIFNLFRYLTFRAGAAFFTALIFGFLFGRPLIDFLRRKQGKGQPIRDDGPATHFAKAGTPTMGGLLILSSLVVSTLLWARLDNPYVWIVLLVTVAFGLIGFADDYAKVKKQNTKGVSGRVRFVIGLVIAALAATAAAWSHPPDLTLQLAMPFFKDALVNLGWFFVPFAMVVIVGAANAVNLTDGLDGLAIMPVMIAGTTLGVIAYVVGNFNLTDYLGVHFVPGTGELLIFTSALVGGGLGFLWYNAPPAAVFMGDTGSLALGGALGAIAVCTKHEIVLAIVGGLFVTEALSVIIQVLYFKRTGRRVFLMAPIHHHFEKKGWAEPQIVIRFWIISLILALIGLSTLKLR</sequence>
<dbReference type="EC" id="2.7.8.13" evidence="1"/>
<dbReference type="EMBL" id="CP000661">
    <property type="protein sequence ID" value="ABP69594.1"/>
    <property type="molecule type" value="Genomic_DNA"/>
</dbReference>
<dbReference type="SMR" id="A4WQD0"/>
<dbReference type="STRING" id="349102.Rsph17025_0688"/>
<dbReference type="KEGG" id="rsq:Rsph17025_0688"/>
<dbReference type="eggNOG" id="COG0472">
    <property type="taxonomic scope" value="Bacteria"/>
</dbReference>
<dbReference type="HOGENOM" id="CLU_023982_0_0_5"/>
<dbReference type="BioCyc" id="RSPH349102:G1G8M-710-MONOMER"/>
<dbReference type="UniPathway" id="UPA00219"/>
<dbReference type="GO" id="GO:0005886">
    <property type="term" value="C:plasma membrane"/>
    <property type="evidence" value="ECO:0007669"/>
    <property type="project" value="UniProtKB-SubCell"/>
</dbReference>
<dbReference type="GO" id="GO:0046872">
    <property type="term" value="F:metal ion binding"/>
    <property type="evidence" value="ECO:0007669"/>
    <property type="project" value="UniProtKB-KW"/>
</dbReference>
<dbReference type="GO" id="GO:0008963">
    <property type="term" value="F:phospho-N-acetylmuramoyl-pentapeptide-transferase activity"/>
    <property type="evidence" value="ECO:0007669"/>
    <property type="project" value="UniProtKB-UniRule"/>
</dbReference>
<dbReference type="GO" id="GO:0051992">
    <property type="term" value="F:UDP-N-acetylmuramoyl-L-alanyl-D-glutamyl-meso-2,6-diaminopimelyl-D-alanyl-D-alanine:undecaprenyl-phosphate transferase activity"/>
    <property type="evidence" value="ECO:0007669"/>
    <property type="project" value="RHEA"/>
</dbReference>
<dbReference type="GO" id="GO:0051301">
    <property type="term" value="P:cell division"/>
    <property type="evidence" value="ECO:0007669"/>
    <property type="project" value="UniProtKB-KW"/>
</dbReference>
<dbReference type="GO" id="GO:0071555">
    <property type="term" value="P:cell wall organization"/>
    <property type="evidence" value="ECO:0007669"/>
    <property type="project" value="UniProtKB-KW"/>
</dbReference>
<dbReference type="GO" id="GO:0009252">
    <property type="term" value="P:peptidoglycan biosynthetic process"/>
    <property type="evidence" value="ECO:0007669"/>
    <property type="project" value="UniProtKB-UniRule"/>
</dbReference>
<dbReference type="GO" id="GO:0008360">
    <property type="term" value="P:regulation of cell shape"/>
    <property type="evidence" value="ECO:0007669"/>
    <property type="project" value="UniProtKB-KW"/>
</dbReference>
<dbReference type="CDD" id="cd06852">
    <property type="entry name" value="GT_MraY"/>
    <property type="match status" value="1"/>
</dbReference>
<dbReference type="HAMAP" id="MF_00038">
    <property type="entry name" value="MraY"/>
    <property type="match status" value="1"/>
</dbReference>
<dbReference type="InterPro" id="IPR000715">
    <property type="entry name" value="Glycosyl_transferase_4"/>
</dbReference>
<dbReference type="InterPro" id="IPR003524">
    <property type="entry name" value="PNAcMuramoyl-5peptid_Trfase"/>
</dbReference>
<dbReference type="InterPro" id="IPR018480">
    <property type="entry name" value="PNAcMuramoyl-5peptid_Trfase_CS"/>
</dbReference>
<dbReference type="NCBIfam" id="TIGR00445">
    <property type="entry name" value="mraY"/>
    <property type="match status" value="1"/>
</dbReference>
<dbReference type="PANTHER" id="PTHR22926">
    <property type="entry name" value="PHOSPHO-N-ACETYLMURAMOYL-PENTAPEPTIDE-TRANSFERASE"/>
    <property type="match status" value="1"/>
</dbReference>
<dbReference type="PANTHER" id="PTHR22926:SF5">
    <property type="entry name" value="PHOSPHO-N-ACETYLMURAMOYL-PENTAPEPTIDE-TRANSFERASE HOMOLOG"/>
    <property type="match status" value="1"/>
</dbReference>
<dbReference type="Pfam" id="PF00953">
    <property type="entry name" value="Glycos_transf_4"/>
    <property type="match status" value="1"/>
</dbReference>
<dbReference type="Pfam" id="PF10555">
    <property type="entry name" value="MraY_sig1"/>
    <property type="match status" value="1"/>
</dbReference>
<dbReference type="PROSITE" id="PS01347">
    <property type="entry name" value="MRAY_1"/>
    <property type="match status" value="1"/>
</dbReference>
<dbReference type="PROSITE" id="PS01348">
    <property type="entry name" value="MRAY_2"/>
    <property type="match status" value="1"/>
</dbReference>
<name>MRAY_CERS5</name>
<accession>A4WQD0</accession>
<keyword id="KW-0131">Cell cycle</keyword>
<keyword id="KW-0132">Cell division</keyword>
<keyword id="KW-0997">Cell inner membrane</keyword>
<keyword id="KW-1003">Cell membrane</keyword>
<keyword id="KW-0133">Cell shape</keyword>
<keyword id="KW-0961">Cell wall biogenesis/degradation</keyword>
<keyword id="KW-0460">Magnesium</keyword>
<keyword id="KW-0472">Membrane</keyword>
<keyword id="KW-0479">Metal-binding</keyword>
<keyword id="KW-0573">Peptidoglycan synthesis</keyword>
<keyword id="KW-0808">Transferase</keyword>
<keyword id="KW-0812">Transmembrane</keyword>
<keyword id="KW-1133">Transmembrane helix</keyword>
<protein>
    <recommendedName>
        <fullName evidence="1">Phospho-N-acetylmuramoyl-pentapeptide-transferase</fullName>
        <ecNumber evidence="1">2.7.8.13</ecNumber>
    </recommendedName>
    <alternativeName>
        <fullName evidence="1">UDP-MurNAc-pentapeptide phosphotransferase</fullName>
    </alternativeName>
</protein>